<proteinExistence type="inferred from homology"/>
<feature type="chain" id="PRO_1000056573" description="Trans-aconitate 2-methyltransferase">
    <location>
        <begin position="1"/>
        <end position="256"/>
    </location>
</feature>
<accession>Q2KAZ5</accession>
<sequence>MAWSASQYAKFEDERTRPARDLLAQVPLQHLRRAIDLGCGPGNSTELIIERYGADGVSGLDSDANMLEAARKRLPGTAFVEADLGSWQPTEPADLLFANAVFQWLPDHLDIFERLMDGLSEGGVLAVQMPDNLGEPSHLAMEETAHGGPWKAAFEEKGVRRQPLAPPSSYYSRLIAKAARVDIWHTIYNHPMADAAAIVEWVKGTGLMPYLARAGEKHREAFLADYLERIEKTYPKMSDGRVLLRFPRIFIVAVKG</sequence>
<organism>
    <name type="scientific">Rhizobium etli (strain ATCC 51251 / DSM 11541 / JCM 21823 / NBRC 15573 / CFN 42)</name>
    <dbReference type="NCBI Taxonomy" id="347834"/>
    <lineage>
        <taxon>Bacteria</taxon>
        <taxon>Pseudomonadati</taxon>
        <taxon>Pseudomonadota</taxon>
        <taxon>Alphaproteobacteria</taxon>
        <taxon>Hyphomicrobiales</taxon>
        <taxon>Rhizobiaceae</taxon>
        <taxon>Rhizobium/Agrobacterium group</taxon>
        <taxon>Rhizobium</taxon>
    </lineage>
</organism>
<reference key="1">
    <citation type="journal article" date="2006" name="Proc. Natl. Acad. Sci. U.S.A.">
        <title>The partitioned Rhizobium etli genome: genetic and metabolic redundancy in seven interacting replicons.</title>
        <authorList>
            <person name="Gonzalez V."/>
            <person name="Santamaria R.I."/>
            <person name="Bustos P."/>
            <person name="Hernandez-Gonzalez I."/>
            <person name="Medrano-Soto A."/>
            <person name="Moreno-Hagelsieb G."/>
            <person name="Janga S.C."/>
            <person name="Ramirez M.A."/>
            <person name="Jimenez-Jacinto V."/>
            <person name="Collado-Vides J."/>
            <person name="Davila G."/>
        </authorList>
    </citation>
    <scope>NUCLEOTIDE SEQUENCE [LARGE SCALE GENOMIC DNA]</scope>
    <source>
        <strain>ATCC 51251 / DSM 11541 / JCM 21823 / NBRC 15573 / CFN 42</strain>
    </source>
</reference>
<dbReference type="EC" id="2.1.1.144" evidence="1"/>
<dbReference type="EMBL" id="CP000133">
    <property type="protein sequence ID" value="ABC89991.1"/>
    <property type="molecule type" value="Genomic_DNA"/>
</dbReference>
<dbReference type="RefSeq" id="WP_011424525.1">
    <property type="nucleotide sequence ID" value="NC_007761.1"/>
</dbReference>
<dbReference type="SMR" id="Q2KAZ5"/>
<dbReference type="KEGG" id="ret:RHE_CH01186"/>
<dbReference type="eggNOG" id="COG4106">
    <property type="taxonomic scope" value="Bacteria"/>
</dbReference>
<dbReference type="HOGENOM" id="CLU_037990_5_2_5"/>
<dbReference type="OrthoDB" id="9795085at2"/>
<dbReference type="Proteomes" id="UP000001936">
    <property type="component" value="Chromosome"/>
</dbReference>
<dbReference type="GO" id="GO:0005737">
    <property type="term" value="C:cytoplasm"/>
    <property type="evidence" value="ECO:0007669"/>
    <property type="project" value="UniProtKB-SubCell"/>
</dbReference>
<dbReference type="GO" id="GO:0030798">
    <property type="term" value="F:trans-aconitate 2-methyltransferase activity"/>
    <property type="evidence" value="ECO:0007669"/>
    <property type="project" value="UniProtKB-UniRule"/>
</dbReference>
<dbReference type="GO" id="GO:0032259">
    <property type="term" value="P:methylation"/>
    <property type="evidence" value="ECO:0007669"/>
    <property type="project" value="UniProtKB-KW"/>
</dbReference>
<dbReference type="CDD" id="cd02440">
    <property type="entry name" value="AdoMet_MTases"/>
    <property type="match status" value="1"/>
</dbReference>
<dbReference type="Gene3D" id="1.10.150.290">
    <property type="entry name" value="S-adenosyl-L-methionine-dependent methyltransferases"/>
    <property type="match status" value="1"/>
</dbReference>
<dbReference type="Gene3D" id="3.40.50.150">
    <property type="entry name" value="Vaccinia Virus protein VP39"/>
    <property type="match status" value="1"/>
</dbReference>
<dbReference type="HAMAP" id="MF_00560">
    <property type="entry name" value="Tran_acon_Me_trans"/>
    <property type="match status" value="1"/>
</dbReference>
<dbReference type="InterPro" id="IPR041698">
    <property type="entry name" value="Methyltransf_25"/>
</dbReference>
<dbReference type="InterPro" id="IPR029063">
    <property type="entry name" value="SAM-dependent_MTases_sf"/>
</dbReference>
<dbReference type="InterPro" id="IPR023506">
    <property type="entry name" value="Trans-aconitate_MeTrfase"/>
</dbReference>
<dbReference type="InterPro" id="IPR023149">
    <property type="entry name" value="Trans_acon_MeTrfase_C"/>
</dbReference>
<dbReference type="NCBIfam" id="NF002463">
    <property type="entry name" value="PRK01683.1"/>
    <property type="match status" value="1"/>
</dbReference>
<dbReference type="PANTHER" id="PTHR43861:SF1">
    <property type="entry name" value="TRANS-ACONITATE 2-METHYLTRANSFERASE"/>
    <property type="match status" value="1"/>
</dbReference>
<dbReference type="PANTHER" id="PTHR43861">
    <property type="entry name" value="TRANS-ACONITATE 2-METHYLTRANSFERASE-RELATED"/>
    <property type="match status" value="1"/>
</dbReference>
<dbReference type="Pfam" id="PF13649">
    <property type="entry name" value="Methyltransf_25"/>
    <property type="match status" value="1"/>
</dbReference>
<dbReference type="SUPFAM" id="SSF53335">
    <property type="entry name" value="S-adenosyl-L-methionine-dependent methyltransferases"/>
    <property type="match status" value="1"/>
</dbReference>
<keyword id="KW-0963">Cytoplasm</keyword>
<keyword id="KW-0489">Methyltransferase</keyword>
<keyword id="KW-1185">Reference proteome</keyword>
<keyword id="KW-0949">S-adenosyl-L-methionine</keyword>
<keyword id="KW-0808">Transferase</keyword>
<protein>
    <recommendedName>
        <fullName evidence="1">Trans-aconitate 2-methyltransferase</fullName>
        <ecNumber evidence="1">2.1.1.144</ecNumber>
    </recommendedName>
</protein>
<comment type="function">
    <text evidence="1">Catalyzes the S-adenosylmethionine monomethyl esterification of trans-aconitate.</text>
</comment>
<comment type="catalytic activity">
    <reaction evidence="1">
        <text>trans-aconitate + S-adenosyl-L-methionine = (E)-3-(methoxycarbonyl)pent-2-enedioate + S-adenosyl-L-homocysteine</text>
        <dbReference type="Rhea" id="RHEA:14969"/>
        <dbReference type="ChEBI" id="CHEBI:15708"/>
        <dbReference type="ChEBI" id="CHEBI:57470"/>
        <dbReference type="ChEBI" id="CHEBI:57856"/>
        <dbReference type="ChEBI" id="CHEBI:59789"/>
        <dbReference type="EC" id="2.1.1.144"/>
    </reaction>
</comment>
<comment type="subcellular location">
    <subcellularLocation>
        <location evidence="1">Cytoplasm</location>
    </subcellularLocation>
</comment>
<comment type="similarity">
    <text evidence="1">Belongs to the methyltransferase superfamily. Tam family.</text>
</comment>
<gene>
    <name evidence="1" type="primary">tam</name>
    <name type="ordered locus">RHE_CH01186</name>
</gene>
<name>TAM_RHIEC</name>
<evidence type="ECO:0000255" key="1">
    <source>
        <dbReference type="HAMAP-Rule" id="MF_00560"/>
    </source>
</evidence>